<comment type="function">
    <text>Repressor which binds to the hutP region in the histidine utilization (hut) operon. It blocks the expression of all the hut genes in the absence of inducer.</text>
</comment>
<comment type="pathway">
    <text>Amino-acid degradation; L-histidine degradation into L-glutamate [regulation].</text>
</comment>
<dbReference type="EMBL" id="M34604">
    <property type="protein sequence ID" value="AAA25075.1"/>
    <property type="molecule type" value="Genomic_DNA"/>
</dbReference>
<dbReference type="EMBL" id="M19665">
    <property type="protein sequence ID" value="AAA25077.1"/>
    <property type="molecule type" value="Genomic_DNA"/>
</dbReference>
<dbReference type="SMR" id="P12380"/>
<dbReference type="STRING" id="548.EAG7_02610"/>
<dbReference type="UniPathway" id="UPA00379"/>
<dbReference type="GO" id="GO:0003677">
    <property type="term" value="F:DNA binding"/>
    <property type="evidence" value="ECO:0007669"/>
    <property type="project" value="UniProtKB-KW"/>
</dbReference>
<dbReference type="GO" id="GO:0003700">
    <property type="term" value="F:DNA-binding transcription factor activity"/>
    <property type="evidence" value="ECO:0007669"/>
    <property type="project" value="InterPro"/>
</dbReference>
<dbReference type="GO" id="GO:0019556">
    <property type="term" value="P:L-histidine catabolic process to glutamate and formamide"/>
    <property type="evidence" value="ECO:0007669"/>
    <property type="project" value="UniProtKB-UniPathway"/>
</dbReference>
<dbReference type="GO" id="GO:0019557">
    <property type="term" value="P:L-histidine catabolic process to glutamate and formate"/>
    <property type="evidence" value="ECO:0007669"/>
    <property type="project" value="UniProtKB-UniPathway"/>
</dbReference>
<dbReference type="GO" id="GO:0045892">
    <property type="term" value="P:negative regulation of DNA-templated transcription"/>
    <property type="evidence" value="ECO:0007669"/>
    <property type="project" value="InterPro"/>
</dbReference>
<dbReference type="CDD" id="cd07377">
    <property type="entry name" value="WHTH_GntR"/>
    <property type="match status" value="1"/>
</dbReference>
<dbReference type="FunFam" id="1.10.10.10:FF:000079">
    <property type="entry name" value="GntR family transcriptional regulator"/>
    <property type="match status" value="1"/>
</dbReference>
<dbReference type="FunFam" id="3.40.1410.10:FF:000004">
    <property type="entry name" value="Histidine utilization repressor"/>
    <property type="match status" value="1"/>
</dbReference>
<dbReference type="Gene3D" id="3.40.1410.10">
    <property type="entry name" value="Chorismate lyase-like"/>
    <property type="match status" value="1"/>
</dbReference>
<dbReference type="Gene3D" id="1.10.10.10">
    <property type="entry name" value="Winged helix-like DNA-binding domain superfamily/Winged helix DNA-binding domain"/>
    <property type="match status" value="1"/>
</dbReference>
<dbReference type="InterPro" id="IPR050679">
    <property type="entry name" value="Bact_HTH_transcr_reg"/>
</dbReference>
<dbReference type="InterPro" id="IPR028978">
    <property type="entry name" value="Chorismate_lyase_/UTRA_dom_sf"/>
</dbReference>
<dbReference type="InterPro" id="IPR010248">
    <property type="entry name" value="His_ut_repres"/>
</dbReference>
<dbReference type="InterPro" id="IPR000524">
    <property type="entry name" value="Tscrpt_reg_HTH_GntR"/>
</dbReference>
<dbReference type="InterPro" id="IPR011663">
    <property type="entry name" value="UTRA"/>
</dbReference>
<dbReference type="InterPro" id="IPR036388">
    <property type="entry name" value="WH-like_DNA-bd_sf"/>
</dbReference>
<dbReference type="InterPro" id="IPR036390">
    <property type="entry name" value="WH_DNA-bd_sf"/>
</dbReference>
<dbReference type="NCBIfam" id="TIGR02018">
    <property type="entry name" value="his_ut_repres"/>
    <property type="match status" value="1"/>
</dbReference>
<dbReference type="NCBIfam" id="NF011575">
    <property type="entry name" value="PRK14999.1"/>
    <property type="match status" value="1"/>
</dbReference>
<dbReference type="PANTHER" id="PTHR44846">
    <property type="entry name" value="MANNOSYL-D-GLYCERATE TRANSPORT/METABOLISM SYSTEM REPRESSOR MNGR-RELATED"/>
    <property type="match status" value="1"/>
</dbReference>
<dbReference type="PANTHER" id="PTHR44846:SF16">
    <property type="entry name" value="TRANSCRIPTIONAL REGULATOR PHNF-RELATED"/>
    <property type="match status" value="1"/>
</dbReference>
<dbReference type="Pfam" id="PF00392">
    <property type="entry name" value="GntR"/>
    <property type="match status" value="1"/>
</dbReference>
<dbReference type="Pfam" id="PF07702">
    <property type="entry name" value="UTRA"/>
    <property type="match status" value="1"/>
</dbReference>
<dbReference type="PRINTS" id="PR00035">
    <property type="entry name" value="HTHGNTR"/>
</dbReference>
<dbReference type="SMART" id="SM00345">
    <property type="entry name" value="HTH_GNTR"/>
    <property type="match status" value="1"/>
</dbReference>
<dbReference type="SMART" id="SM00866">
    <property type="entry name" value="UTRA"/>
    <property type="match status" value="1"/>
</dbReference>
<dbReference type="SUPFAM" id="SSF64288">
    <property type="entry name" value="Chorismate lyase-like"/>
    <property type="match status" value="1"/>
</dbReference>
<dbReference type="SUPFAM" id="SSF46785">
    <property type="entry name" value="Winged helix' DNA-binding domain"/>
    <property type="match status" value="1"/>
</dbReference>
<dbReference type="PROSITE" id="PS50949">
    <property type="entry name" value="HTH_GNTR"/>
    <property type="match status" value="1"/>
</dbReference>
<organism>
    <name type="scientific">Klebsiella aerogenes</name>
    <name type="common">Enterobacter aerogenes</name>
    <dbReference type="NCBI Taxonomy" id="548"/>
    <lineage>
        <taxon>Bacteria</taxon>
        <taxon>Pseudomonadati</taxon>
        <taxon>Pseudomonadota</taxon>
        <taxon>Gammaproteobacteria</taxon>
        <taxon>Enterobacterales</taxon>
        <taxon>Enterobacteriaceae</taxon>
        <taxon>Klebsiella/Raoultella group</taxon>
        <taxon>Klebsiella</taxon>
    </lineage>
</organism>
<accession>P12380</accession>
<gene>
    <name type="primary">hutC</name>
</gene>
<keyword id="KW-0238">DNA-binding</keyword>
<keyword id="KW-0369">Histidine metabolism</keyword>
<keyword id="KW-0678">Repressor</keyword>
<keyword id="KW-0804">Transcription</keyword>
<keyword id="KW-0805">Transcription regulation</keyword>
<proteinExistence type="predicted"/>
<sequence length="241" mass="27215">MFAQQPRSAPAPFYEKVKQAISEKIHSGVWRPHDRIPSEAELVAQFGFSRMTINRALRELTDEGLLVRLQGVGTFVAEPKGQSALFEVRSIAAEIVARHHQHRCEVLLLEETRADHIQATALSVPEGTRIFHSLMVHYENEVPVQIEDRCVNAAVVPDYLHQDYTATTPHDYLSLIAPLTEGEHIVEAVQATAEECALLHIHAHDPCLLIRRRTWSTTHIVSHARLLFPGSRYRLQGRFGS</sequence>
<evidence type="ECO:0000255" key="1">
    <source>
        <dbReference type="PROSITE-ProRule" id="PRU00307"/>
    </source>
</evidence>
<reference key="1">
    <citation type="journal article" date="1990" name="J. Bacteriol.">
        <title>Nucleotide sequence of the gene encoding the repressor for the histidine utilization genes of Klebsiella aerogenes.</title>
        <authorList>
            <person name="Schwacha A."/>
            <person name="Bender R.A."/>
        </authorList>
    </citation>
    <scope>NUCLEOTIDE SEQUENCE [GENOMIC DNA]</scope>
</reference>
<reference key="2">
    <citation type="journal article" date="1988" name="J. Bacteriol.">
        <title>Bidirectional promoter in the hut(P) region of the histidine utilization (hut) operons from Klebsiella aerogenes.</title>
        <authorList>
            <person name="Nieuwkoop A.J."/>
            <person name="Baldauf S.A."/>
            <person name="Hudspeth M.E.S."/>
            <person name="Bender R.A."/>
        </authorList>
    </citation>
    <scope>NUCLEOTIDE SEQUENCE [GENOMIC DNA] OF 216-241</scope>
</reference>
<feature type="chain" id="PRO_0000050649" description="Histidine utilization repressor">
    <location>
        <begin position="1"/>
        <end position="241"/>
    </location>
</feature>
<feature type="domain" description="HTH gntR-type" evidence="1">
    <location>
        <begin position="11"/>
        <end position="79"/>
    </location>
</feature>
<feature type="DNA-binding region" description="H-T-H motif" evidence="1">
    <location>
        <begin position="39"/>
        <end position="58"/>
    </location>
</feature>
<name>HUTC_KLEAE</name>
<protein>
    <recommendedName>
        <fullName>Histidine utilization repressor</fullName>
    </recommendedName>
</protein>